<evidence type="ECO:0000255" key="1">
    <source>
        <dbReference type="HAMAP-Rule" id="MF_01825"/>
    </source>
</evidence>
<dbReference type="EC" id="1.1.1.290" evidence="1"/>
<dbReference type="EMBL" id="CP000155">
    <property type="protein sequence ID" value="ABC29115.1"/>
    <property type="molecule type" value="Genomic_DNA"/>
</dbReference>
<dbReference type="RefSeq" id="WP_011396184.1">
    <property type="nucleotide sequence ID" value="NC_007645.1"/>
</dbReference>
<dbReference type="SMR" id="Q2SJQ9"/>
<dbReference type="STRING" id="349521.HCH_02292"/>
<dbReference type="KEGG" id="hch:HCH_02292"/>
<dbReference type="eggNOG" id="COG0111">
    <property type="taxonomic scope" value="Bacteria"/>
</dbReference>
<dbReference type="HOGENOM" id="CLU_019796_4_0_6"/>
<dbReference type="OrthoDB" id="9770208at2"/>
<dbReference type="UniPathway" id="UPA00244">
    <property type="reaction ID" value="UER00310"/>
</dbReference>
<dbReference type="Proteomes" id="UP000000238">
    <property type="component" value="Chromosome"/>
</dbReference>
<dbReference type="GO" id="GO:0005829">
    <property type="term" value="C:cytosol"/>
    <property type="evidence" value="ECO:0007669"/>
    <property type="project" value="TreeGrafter"/>
</dbReference>
<dbReference type="GO" id="GO:0033711">
    <property type="term" value="F:4-phosphoerythronate dehydrogenase activity"/>
    <property type="evidence" value="ECO:0007669"/>
    <property type="project" value="UniProtKB-EC"/>
</dbReference>
<dbReference type="GO" id="GO:0051287">
    <property type="term" value="F:NAD binding"/>
    <property type="evidence" value="ECO:0007669"/>
    <property type="project" value="InterPro"/>
</dbReference>
<dbReference type="GO" id="GO:0046983">
    <property type="term" value="F:protein dimerization activity"/>
    <property type="evidence" value="ECO:0007669"/>
    <property type="project" value="InterPro"/>
</dbReference>
<dbReference type="GO" id="GO:0036001">
    <property type="term" value="P:'de novo' pyridoxal 5'-phosphate biosynthetic process"/>
    <property type="evidence" value="ECO:0007669"/>
    <property type="project" value="TreeGrafter"/>
</dbReference>
<dbReference type="GO" id="GO:0008615">
    <property type="term" value="P:pyridoxine biosynthetic process"/>
    <property type="evidence" value="ECO:0007669"/>
    <property type="project" value="UniProtKB-UniRule"/>
</dbReference>
<dbReference type="CDD" id="cd12158">
    <property type="entry name" value="ErythrP_dh"/>
    <property type="match status" value="1"/>
</dbReference>
<dbReference type="Gene3D" id="3.30.1370.170">
    <property type="match status" value="1"/>
</dbReference>
<dbReference type="Gene3D" id="3.40.50.720">
    <property type="entry name" value="NAD(P)-binding Rossmann-like Domain"/>
    <property type="match status" value="2"/>
</dbReference>
<dbReference type="HAMAP" id="MF_01825">
    <property type="entry name" value="PdxB"/>
    <property type="match status" value="1"/>
</dbReference>
<dbReference type="InterPro" id="IPR006139">
    <property type="entry name" value="D-isomer_2_OHA_DH_cat_dom"/>
</dbReference>
<dbReference type="InterPro" id="IPR029753">
    <property type="entry name" value="D-isomer_DH_CS"/>
</dbReference>
<dbReference type="InterPro" id="IPR006140">
    <property type="entry name" value="D-isomer_DH_NAD-bd"/>
</dbReference>
<dbReference type="InterPro" id="IPR020921">
    <property type="entry name" value="Erythronate-4-P_DHase"/>
</dbReference>
<dbReference type="InterPro" id="IPR024531">
    <property type="entry name" value="Erythronate-4-P_DHase_dimer"/>
</dbReference>
<dbReference type="InterPro" id="IPR036291">
    <property type="entry name" value="NAD(P)-bd_dom_sf"/>
</dbReference>
<dbReference type="InterPro" id="IPR038251">
    <property type="entry name" value="PdxB_dimer_sf"/>
</dbReference>
<dbReference type="NCBIfam" id="NF001309">
    <property type="entry name" value="PRK00257.1"/>
    <property type="match status" value="1"/>
</dbReference>
<dbReference type="PANTHER" id="PTHR42938">
    <property type="entry name" value="FORMATE DEHYDROGENASE 1"/>
    <property type="match status" value="1"/>
</dbReference>
<dbReference type="PANTHER" id="PTHR42938:SF9">
    <property type="entry name" value="FORMATE DEHYDROGENASE 1"/>
    <property type="match status" value="1"/>
</dbReference>
<dbReference type="Pfam" id="PF00389">
    <property type="entry name" value="2-Hacid_dh"/>
    <property type="match status" value="1"/>
</dbReference>
<dbReference type="Pfam" id="PF02826">
    <property type="entry name" value="2-Hacid_dh_C"/>
    <property type="match status" value="1"/>
</dbReference>
<dbReference type="Pfam" id="PF11890">
    <property type="entry name" value="DUF3410"/>
    <property type="match status" value="1"/>
</dbReference>
<dbReference type="SUPFAM" id="SSF52283">
    <property type="entry name" value="Formate/glycerate dehydrogenase catalytic domain-like"/>
    <property type="match status" value="1"/>
</dbReference>
<dbReference type="SUPFAM" id="SSF51735">
    <property type="entry name" value="NAD(P)-binding Rossmann-fold domains"/>
    <property type="match status" value="1"/>
</dbReference>
<dbReference type="PROSITE" id="PS00671">
    <property type="entry name" value="D_2_HYDROXYACID_DH_3"/>
    <property type="match status" value="1"/>
</dbReference>
<proteinExistence type="inferred from homology"/>
<reference key="1">
    <citation type="journal article" date="2005" name="Nucleic Acids Res.">
        <title>Genomic blueprint of Hahella chejuensis, a marine microbe producing an algicidal agent.</title>
        <authorList>
            <person name="Jeong H."/>
            <person name="Yim J.H."/>
            <person name="Lee C."/>
            <person name="Choi S.-H."/>
            <person name="Park Y.K."/>
            <person name="Yoon S.H."/>
            <person name="Hur C.-G."/>
            <person name="Kang H.-Y."/>
            <person name="Kim D."/>
            <person name="Lee H.H."/>
            <person name="Park K.H."/>
            <person name="Park S.-H."/>
            <person name="Park H.-S."/>
            <person name="Lee H.K."/>
            <person name="Oh T.K."/>
            <person name="Kim J.F."/>
        </authorList>
    </citation>
    <scope>NUCLEOTIDE SEQUENCE [LARGE SCALE GENOMIC DNA]</scope>
    <source>
        <strain>KCTC 2396</strain>
    </source>
</reference>
<feature type="chain" id="PRO_0000297442" description="Erythronate-4-phosphate dehydrogenase">
    <location>
        <begin position="1"/>
        <end position="381"/>
    </location>
</feature>
<feature type="active site" evidence="1">
    <location>
        <position position="206"/>
    </location>
</feature>
<feature type="active site" evidence="1">
    <location>
        <position position="235"/>
    </location>
</feature>
<feature type="active site" description="Proton donor" evidence="1">
    <location>
        <position position="252"/>
    </location>
</feature>
<feature type="binding site" evidence="1">
    <location>
        <position position="45"/>
    </location>
    <ligand>
        <name>substrate</name>
    </ligand>
</feature>
<feature type="binding site" evidence="1">
    <location>
        <position position="66"/>
    </location>
    <ligand>
        <name>substrate</name>
    </ligand>
</feature>
<feature type="binding site" evidence="1">
    <location>
        <position position="146"/>
    </location>
    <ligand>
        <name>NAD(+)</name>
        <dbReference type="ChEBI" id="CHEBI:57540"/>
    </ligand>
</feature>
<feature type="binding site" evidence="1">
    <location>
        <position position="173"/>
    </location>
    <ligand>
        <name>NAD(+)</name>
        <dbReference type="ChEBI" id="CHEBI:57540"/>
    </ligand>
</feature>
<feature type="binding site" evidence="1">
    <location>
        <position position="230"/>
    </location>
    <ligand>
        <name>NAD(+)</name>
        <dbReference type="ChEBI" id="CHEBI:57540"/>
    </ligand>
</feature>
<feature type="binding site" evidence="1">
    <location>
        <position position="255"/>
    </location>
    <ligand>
        <name>NAD(+)</name>
        <dbReference type="ChEBI" id="CHEBI:57540"/>
    </ligand>
</feature>
<feature type="binding site" evidence="1">
    <location>
        <position position="256"/>
    </location>
    <ligand>
        <name>substrate</name>
    </ligand>
</feature>
<protein>
    <recommendedName>
        <fullName evidence="1">Erythronate-4-phosphate dehydrogenase</fullName>
        <ecNumber evidence="1">1.1.1.290</ecNumber>
    </recommendedName>
</protein>
<keyword id="KW-0963">Cytoplasm</keyword>
<keyword id="KW-0520">NAD</keyword>
<keyword id="KW-0560">Oxidoreductase</keyword>
<keyword id="KW-0664">Pyridoxine biosynthesis</keyword>
<keyword id="KW-1185">Reference proteome</keyword>
<name>PDXB_HAHCH</name>
<organism>
    <name type="scientific">Hahella chejuensis (strain KCTC 2396)</name>
    <dbReference type="NCBI Taxonomy" id="349521"/>
    <lineage>
        <taxon>Bacteria</taxon>
        <taxon>Pseudomonadati</taxon>
        <taxon>Pseudomonadota</taxon>
        <taxon>Gammaproteobacteria</taxon>
        <taxon>Oceanospirillales</taxon>
        <taxon>Hahellaceae</taxon>
        <taxon>Hahella</taxon>
    </lineage>
</organism>
<accession>Q2SJQ9</accession>
<comment type="function">
    <text evidence="1">Catalyzes the oxidation of erythronate-4-phosphate to 3-hydroxy-2-oxo-4-phosphonooxybutanoate.</text>
</comment>
<comment type="catalytic activity">
    <reaction evidence="1">
        <text>4-phospho-D-erythronate + NAD(+) = (R)-3-hydroxy-2-oxo-4-phosphooxybutanoate + NADH + H(+)</text>
        <dbReference type="Rhea" id="RHEA:18829"/>
        <dbReference type="ChEBI" id="CHEBI:15378"/>
        <dbReference type="ChEBI" id="CHEBI:57540"/>
        <dbReference type="ChEBI" id="CHEBI:57945"/>
        <dbReference type="ChEBI" id="CHEBI:58538"/>
        <dbReference type="ChEBI" id="CHEBI:58766"/>
        <dbReference type="EC" id="1.1.1.290"/>
    </reaction>
</comment>
<comment type="pathway">
    <text evidence="1">Cofactor biosynthesis; pyridoxine 5'-phosphate biosynthesis; pyridoxine 5'-phosphate from D-erythrose 4-phosphate: step 2/5.</text>
</comment>
<comment type="subunit">
    <text evidence="1">Homodimer.</text>
</comment>
<comment type="subcellular location">
    <subcellularLocation>
        <location evidence="1">Cytoplasm</location>
    </subcellularLocation>
</comment>
<comment type="similarity">
    <text evidence="1">Belongs to the D-isomer specific 2-hydroxyacid dehydrogenase family. PdxB subfamily.</text>
</comment>
<gene>
    <name evidence="1" type="primary">pdxB</name>
    <name type="ordered locus">HCH_02292</name>
</gene>
<sequence length="381" mass="42089">MKIVADENIPLLQPFFGSMGEIHTLPGREISNQHLRDADVLLVRSVTKVDERLLENTGVKFVGSATIGCNHVDLDYLTSRGIGFSNAPGCNASAVVEYVVSCLSVLSEQLGFELEDKTVGIIGRGEIGGRLERALTLLGLEVKSNDPPKEAAGEQNLFSLEEVLQCDIITLHTPLTDSGSYPTRELLNATIIENLRPDQILINTCRGEVIDEAALKGRLQKGDGLTVALDVWNNEPAIDVELAMLCHFATPHIAGYTLDGRTAGTEIIYQHLSRYLGLPVRHKLGQFLPEPPLRRMAFSSGVDPDWALHTAIRASYDVRHDDSQLKRTLRLDAPMRAQEFDRLRREYRVRRGFDRIKIELKGGKADLLATLSAVGFNLSSK</sequence>